<dbReference type="EC" id="2.1.1.166" evidence="1"/>
<dbReference type="EMBL" id="AE014299">
    <property type="protein sequence ID" value="AAN54266.1"/>
    <property type="molecule type" value="Genomic_DNA"/>
</dbReference>
<dbReference type="RefSeq" id="NP_716821.1">
    <property type="nucleotide sequence ID" value="NC_004347.2"/>
</dbReference>
<dbReference type="RefSeq" id="WP_011071426.1">
    <property type="nucleotide sequence ID" value="NZ_CP053946.1"/>
</dbReference>
<dbReference type="SMR" id="Q8EHM3"/>
<dbReference type="STRING" id="211586.SO_1196"/>
<dbReference type="PaxDb" id="211586-SO_1196"/>
<dbReference type="KEGG" id="son:SO_1196"/>
<dbReference type="PATRIC" id="fig|211586.12.peg.1148"/>
<dbReference type="eggNOG" id="COG0293">
    <property type="taxonomic scope" value="Bacteria"/>
</dbReference>
<dbReference type="HOGENOM" id="CLU_009422_4_0_6"/>
<dbReference type="OrthoDB" id="9790080at2"/>
<dbReference type="PhylomeDB" id="Q8EHM3"/>
<dbReference type="BioCyc" id="SONE211586:G1GMP-1106-MONOMER"/>
<dbReference type="Proteomes" id="UP000008186">
    <property type="component" value="Chromosome"/>
</dbReference>
<dbReference type="GO" id="GO:0005737">
    <property type="term" value="C:cytoplasm"/>
    <property type="evidence" value="ECO:0007669"/>
    <property type="project" value="UniProtKB-SubCell"/>
</dbReference>
<dbReference type="GO" id="GO:0008650">
    <property type="term" value="F:rRNA (uridine-2'-O-)-methyltransferase activity"/>
    <property type="evidence" value="ECO:0000318"/>
    <property type="project" value="GO_Central"/>
</dbReference>
<dbReference type="GO" id="GO:0001510">
    <property type="term" value="P:RNA methylation"/>
    <property type="evidence" value="ECO:0000318"/>
    <property type="project" value="GO_Central"/>
</dbReference>
<dbReference type="FunFam" id="3.40.50.150:FF:000005">
    <property type="entry name" value="Ribosomal RNA large subunit methyltransferase E"/>
    <property type="match status" value="1"/>
</dbReference>
<dbReference type="Gene3D" id="3.40.50.150">
    <property type="entry name" value="Vaccinia Virus protein VP39"/>
    <property type="match status" value="1"/>
</dbReference>
<dbReference type="HAMAP" id="MF_01547">
    <property type="entry name" value="RNA_methyltr_E"/>
    <property type="match status" value="1"/>
</dbReference>
<dbReference type="InterPro" id="IPR050082">
    <property type="entry name" value="RNA_methyltr_RlmE"/>
</dbReference>
<dbReference type="InterPro" id="IPR002877">
    <property type="entry name" value="RNA_MeTrfase_FtsJ_dom"/>
</dbReference>
<dbReference type="InterPro" id="IPR015507">
    <property type="entry name" value="rRNA-MeTfrase_E"/>
</dbReference>
<dbReference type="InterPro" id="IPR029063">
    <property type="entry name" value="SAM-dependent_MTases_sf"/>
</dbReference>
<dbReference type="NCBIfam" id="NF008390">
    <property type="entry name" value="PRK11188.1"/>
    <property type="match status" value="1"/>
</dbReference>
<dbReference type="PANTHER" id="PTHR10920">
    <property type="entry name" value="RIBOSOMAL RNA METHYLTRANSFERASE"/>
    <property type="match status" value="1"/>
</dbReference>
<dbReference type="PANTHER" id="PTHR10920:SF18">
    <property type="entry name" value="RRNA METHYLTRANSFERASE 2, MITOCHONDRIAL"/>
    <property type="match status" value="1"/>
</dbReference>
<dbReference type="Pfam" id="PF01728">
    <property type="entry name" value="FtsJ"/>
    <property type="match status" value="1"/>
</dbReference>
<dbReference type="PIRSF" id="PIRSF005461">
    <property type="entry name" value="23S_rRNA_mtase"/>
    <property type="match status" value="1"/>
</dbReference>
<dbReference type="SUPFAM" id="SSF53335">
    <property type="entry name" value="S-adenosyl-L-methionine-dependent methyltransferases"/>
    <property type="match status" value="1"/>
</dbReference>
<sequence>MSGKKRTASSNRWMLEHFDDHYVKLAQKRGLRSRAAFKLEELQQKDQLIRPGMTVVDLGAAPGGWSQVAVKLVGDKGKVIACDILPMDPIVGVDFLQGDFREEKVLEALLTRVGADKVDVVLSDMAPNMSGSDGVDQPRAMYLVELALDMCHQVLAPNGSFAVKVFQGEGFDEYMKAVKEAFKVVKTRKPDSSRARSREVYLVATGYKL</sequence>
<feature type="chain" id="PRO_0000155540" description="Ribosomal RNA large subunit methyltransferase E">
    <location>
        <begin position="1"/>
        <end position="209"/>
    </location>
</feature>
<feature type="active site" description="Proton acceptor" evidence="1">
    <location>
        <position position="164"/>
    </location>
</feature>
<feature type="binding site" evidence="1">
    <location>
        <position position="63"/>
    </location>
    <ligand>
        <name>S-adenosyl-L-methionine</name>
        <dbReference type="ChEBI" id="CHEBI:59789"/>
    </ligand>
</feature>
<feature type="binding site" evidence="1">
    <location>
        <position position="65"/>
    </location>
    <ligand>
        <name>S-adenosyl-L-methionine</name>
        <dbReference type="ChEBI" id="CHEBI:59789"/>
    </ligand>
</feature>
<feature type="binding site" evidence="1">
    <location>
        <position position="83"/>
    </location>
    <ligand>
        <name>S-adenosyl-L-methionine</name>
        <dbReference type="ChEBI" id="CHEBI:59789"/>
    </ligand>
</feature>
<feature type="binding site" evidence="1">
    <location>
        <position position="99"/>
    </location>
    <ligand>
        <name>S-adenosyl-L-methionine</name>
        <dbReference type="ChEBI" id="CHEBI:59789"/>
    </ligand>
</feature>
<feature type="binding site" evidence="1">
    <location>
        <position position="124"/>
    </location>
    <ligand>
        <name>S-adenosyl-L-methionine</name>
        <dbReference type="ChEBI" id="CHEBI:59789"/>
    </ligand>
</feature>
<name>RLME_SHEON</name>
<organism>
    <name type="scientific">Shewanella oneidensis (strain ATCC 700550 / JCM 31522 / CIP 106686 / LMG 19005 / NCIMB 14063 / MR-1)</name>
    <dbReference type="NCBI Taxonomy" id="211586"/>
    <lineage>
        <taxon>Bacteria</taxon>
        <taxon>Pseudomonadati</taxon>
        <taxon>Pseudomonadota</taxon>
        <taxon>Gammaproteobacteria</taxon>
        <taxon>Alteromonadales</taxon>
        <taxon>Shewanellaceae</taxon>
        <taxon>Shewanella</taxon>
    </lineage>
</organism>
<proteinExistence type="inferred from homology"/>
<keyword id="KW-0963">Cytoplasm</keyword>
<keyword id="KW-0489">Methyltransferase</keyword>
<keyword id="KW-1185">Reference proteome</keyword>
<keyword id="KW-0698">rRNA processing</keyword>
<keyword id="KW-0949">S-adenosyl-L-methionine</keyword>
<keyword id="KW-0808">Transferase</keyword>
<accession>Q8EHM3</accession>
<comment type="function">
    <text evidence="1">Specifically methylates the uridine in position 2552 of 23S rRNA at the 2'-O position of the ribose in the fully assembled 50S ribosomal subunit.</text>
</comment>
<comment type="catalytic activity">
    <reaction evidence="1">
        <text>uridine(2552) in 23S rRNA + S-adenosyl-L-methionine = 2'-O-methyluridine(2552) in 23S rRNA + S-adenosyl-L-homocysteine + H(+)</text>
        <dbReference type="Rhea" id="RHEA:42720"/>
        <dbReference type="Rhea" id="RHEA-COMP:10202"/>
        <dbReference type="Rhea" id="RHEA-COMP:10203"/>
        <dbReference type="ChEBI" id="CHEBI:15378"/>
        <dbReference type="ChEBI" id="CHEBI:57856"/>
        <dbReference type="ChEBI" id="CHEBI:59789"/>
        <dbReference type="ChEBI" id="CHEBI:65315"/>
        <dbReference type="ChEBI" id="CHEBI:74478"/>
        <dbReference type="EC" id="2.1.1.166"/>
    </reaction>
</comment>
<comment type="subcellular location">
    <subcellularLocation>
        <location evidence="1">Cytoplasm</location>
    </subcellularLocation>
</comment>
<comment type="similarity">
    <text evidence="1">Belongs to the class I-like SAM-binding methyltransferase superfamily. RNA methyltransferase RlmE family.</text>
</comment>
<protein>
    <recommendedName>
        <fullName evidence="1">Ribosomal RNA large subunit methyltransferase E</fullName>
        <ecNumber evidence="1">2.1.1.166</ecNumber>
    </recommendedName>
    <alternativeName>
        <fullName evidence="1">23S rRNA Um2552 methyltransferase</fullName>
    </alternativeName>
    <alternativeName>
        <fullName evidence="1">rRNA (uridine-2'-O-)-methyltransferase</fullName>
    </alternativeName>
</protein>
<gene>
    <name evidence="1" type="primary">rlmE</name>
    <name evidence="1" type="synonym">ftsJ</name>
    <name evidence="1" type="synonym">rrmJ</name>
    <name type="ordered locus">SO_1196</name>
</gene>
<evidence type="ECO:0000255" key="1">
    <source>
        <dbReference type="HAMAP-Rule" id="MF_01547"/>
    </source>
</evidence>
<reference key="1">
    <citation type="journal article" date="2002" name="Nat. Biotechnol.">
        <title>Genome sequence of the dissimilatory metal ion-reducing bacterium Shewanella oneidensis.</title>
        <authorList>
            <person name="Heidelberg J.F."/>
            <person name="Paulsen I.T."/>
            <person name="Nelson K.E."/>
            <person name="Gaidos E.J."/>
            <person name="Nelson W.C."/>
            <person name="Read T.D."/>
            <person name="Eisen J.A."/>
            <person name="Seshadri R."/>
            <person name="Ward N.L."/>
            <person name="Methe B.A."/>
            <person name="Clayton R.A."/>
            <person name="Meyer T."/>
            <person name="Tsapin A."/>
            <person name="Scott J."/>
            <person name="Beanan M.J."/>
            <person name="Brinkac L.M."/>
            <person name="Daugherty S.C."/>
            <person name="DeBoy R.T."/>
            <person name="Dodson R.J."/>
            <person name="Durkin A.S."/>
            <person name="Haft D.H."/>
            <person name="Kolonay J.F."/>
            <person name="Madupu R."/>
            <person name="Peterson J.D."/>
            <person name="Umayam L.A."/>
            <person name="White O."/>
            <person name="Wolf A.M."/>
            <person name="Vamathevan J.J."/>
            <person name="Weidman J.F."/>
            <person name="Impraim M."/>
            <person name="Lee K."/>
            <person name="Berry K.J."/>
            <person name="Lee C."/>
            <person name="Mueller J."/>
            <person name="Khouri H.M."/>
            <person name="Gill J."/>
            <person name="Utterback T.R."/>
            <person name="McDonald L.A."/>
            <person name="Feldblyum T.V."/>
            <person name="Smith H.O."/>
            <person name="Venter J.C."/>
            <person name="Nealson K.H."/>
            <person name="Fraser C.M."/>
        </authorList>
    </citation>
    <scope>NUCLEOTIDE SEQUENCE [LARGE SCALE GENOMIC DNA]</scope>
    <source>
        <strain>ATCC 700550 / JCM 31522 / CIP 106686 / LMG 19005 / NCIMB 14063 / MR-1</strain>
    </source>
</reference>